<sequence length="239" mass="26122">MLRRLSPIQPDSFEFTPANLEWARAQMTKYPEGRQQSAIIPVLWRAQEQEGWLSRPAIEYCADLLGMPYIRALEVATFYFMFQLQPVGSVAHIQICGTTTCMICGAEDLIRVCKEKIAPEPHALSADGRFSWEEVECLGACTNAPMAQIGKDFYEDLTVEKLAALIDRFAAGEVPVPGPQNGRFSAEALGGPTALADLKGGEAHNASVARALRLGDSIKRIDGTEVPITTPWLATQNGV</sequence>
<dbReference type="EC" id="7.1.1.-"/>
<dbReference type="EMBL" id="M74171">
    <property type="protein sequence ID" value="AAA25588.1"/>
    <property type="molecule type" value="Genomic_DNA"/>
</dbReference>
<dbReference type="PIR" id="A40296">
    <property type="entry name" value="A40296"/>
</dbReference>
<dbReference type="SMR" id="P29914"/>
<dbReference type="TCDB" id="3.D.1.2.1">
    <property type="family name" value="the h+ or na+-translocating nadh dehydrogenase (ndh) family"/>
</dbReference>
<dbReference type="OMA" id="IMSIYPE"/>
<dbReference type="GO" id="GO:0005886">
    <property type="term" value="C:plasma membrane"/>
    <property type="evidence" value="ECO:0007669"/>
    <property type="project" value="UniProtKB-SubCell"/>
</dbReference>
<dbReference type="GO" id="GO:0051537">
    <property type="term" value="F:2 iron, 2 sulfur cluster binding"/>
    <property type="evidence" value="ECO:0007669"/>
    <property type="project" value="UniProtKB-KW"/>
</dbReference>
<dbReference type="GO" id="GO:0046872">
    <property type="term" value="F:metal ion binding"/>
    <property type="evidence" value="ECO:0007669"/>
    <property type="project" value="UniProtKB-KW"/>
</dbReference>
<dbReference type="GO" id="GO:0003954">
    <property type="term" value="F:NADH dehydrogenase activity"/>
    <property type="evidence" value="ECO:0007669"/>
    <property type="project" value="TreeGrafter"/>
</dbReference>
<dbReference type="GO" id="GO:0048038">
    <property type="term" value="F:quinone binding"/>
    <property type="evidence" value="ECO:0007669"/>
    <property type="project" value="UniProtKB-KW"/>
</dbReference>
<dbReference type="CDD" id="cd03064">
    <property type="entry name" value="TRX_Fd_NuoE"/>
    <property type="match status" value="1"/>
</dbReference>
<dbReference type="FunFam" id="3.40.30.10:FF:000022">
    <property type="entry name" value="NADH dehydrogenase flavoprotein 2, mitochondrial"/>
    <property type="match status" value="1"/>
</dbReference>
<dbReference type="FunFam" id="1.10.10.1590:FF:000001">
    <property type="entry name" value="NADH-quinone oxidoreductase subunit E"/>
    <property type="match status" value="1"/>
</dbReference>
<dbReference type="Gene3D" id="3.40.30.10">
    <property type="entry name" value="Glutaredoxin"/>
    <property type="match status" value="1"/>
</dbReference>
<dbReference type="Gene3D" id="1.10.10.1590">
    <property type="entry name" value="NADH-quinone oxidoreductase subunit E"/>
    <property type="match status" value="1"/>
</dbReference>
<dbReference type="InterPro" id="IPR002023">
    <property type="entry name" value="NuoE-like"/>
</dbReference>
<dbReference type="InterPro" id="IPR042128">
    <property type="entry name" value="NuoE_dom"/>
</dbReference>
<dbReference type="InterPro" id="IPR041921">
    <property type="entry name" value="NuoE_N"/>
</dbReference>
<dbReference type="InterPro" id="IPR036249">
    <property type="entry name" value="Thioredoxin-like_sf"/>
</dbReference>
<dbReference type="NCBIfam" id="TIGR01958">
    <property type="entry name" value="nuoE_fam"/>
    <property type="match status" value="1"/>
</dbReference>
<dbReference type="NCBIfam" id="NF005724">
    <property type="entry name" value="PRK07539.1-4"/>
    <property type="match status" value="1"/>
</dbReference>
<dbReference type="PANTHER" id="PTHR10371:SF3">
    <property type="entry name" value="NADH DEHYDROGENASE [UBIQUINONE] FLAVOPROTEIN 2, MITOCHONDRIAL"/>
    <property type="match status" value="1"/>
</dbReference>
<dbReference type="PANTHER" id="PTHR10371">
    <property type="entry name" value="NADH DEHYDROGENASE UBIQUINONE FLAVOPROTEIN 2, MITOCHONDRIAL"/>
    <property type="match status" value="1"/>
</dbReference>
<dbReference type="Pfam" id="PF01257">
    <property type="entry name" value="2Fe-2S_thioredx"/>
    <property type="match status" value="1"/>
</dbReference>
<dbReference type="PIRSF" id="PIRSF000216">
    <property type="entry name" value="NADH_DH_24kDa"/>
    <property type="match status" value="1"/>
</dbReference>
<dbReference type="SUPFAM" id="SSF52833">
    <property type="entry name" value="Thioredoxin-like"/>
    <property type="match status" value="1"/>
</dbReference>
<dbReference type="PROSITE" id="PS01099">
    <property type="entry name" value="COMPLEX1_24K"/>
    <property type="match status" value="1"/>
</dbReference>
<organism>
    <name type="scientific">Paracoccus denitrificans</name>
    <dbReference type="NCBI Taxonomy" id="266"/>
    <lineage>
        <taxon>Bacteria</taxon>
        <taxon>Pseudomonadati</taxon>
        <taxon>Pseudomonadota</taxon>
        <taxon>Alphaproteobacteria</taxon>
        <taxon>Rhodobacterales</taxon>
        <taxon>Paracoccaceae</taxon>
        <taxon>Paracoccus</taxon>
    </lineage>
</organism>
<protein>
    <recommendedName>
        <fullName>NADH-quinone oxidoreductase chain 2</fullName>
        <ecNumber>7.1.1.-</ecNumber>
    </recommendedName>
    <alternativeName>
        <fullName>NADH dehydrogenase I, chain 2</fullName>
    </alternativeName>
    <alternativeName>
        <fullName>NDH-1, chain 2</fullName>
    </alternativeName>
</protein>
<proteinExistence type="evidence at protein level"/>
<accession>P29914</accession>
<name>NQO2_PARDE</name>
<reference key="1">
    <citation type="journal article" date="1991" name="Biochemistry">
        <title>Characterization of the 25-kilodalton subunit of the energy-transducing NADH-ubiquinone oxidoreductase of Paracoccus denitrificans: sequence similarity to the 24-kilodalton subunit of the flavoprotein fraction of mammalian complex I.</title>
        <authorList>
            <person name="Xu X."/>
            <person name="Matsuno-Yagi A."/>
            <person name="Yagi T."/>
        </authorList>
    </citation>
    <scope>NUCLEOTIDE SEQUENCE [GENOMIC DNA]</scope>
    <scope>PROTEIN SEQUENCE OF 1-10</scope>
    <source>
        <strain>ATCC 13543 / NRRL B-3784 / NRC 449</strain>
    </source>
</reference>
<reference key="2">
    <citation type="journal article" date="1994" name="FEBS Lett.">
        <title>Identification of amino acid residues associated with the [2Fe-2S] cluster of the 25 kDa (NQO2) subunit of the proton-translocating NADH-quinone oxidoreductase of Paracoccus denitrificans.</title>
        <authorList>
            <person name="Yano T."/>
            <person name="Sled V.D."/>
            <person name="Ohnishi T."/>
            <person name="Yagi T."/>
        </authorList>
    </citation>
    <scope>PROBABLE 2FE-2S CLUSTER</scope>
    <scope>MUTAGENESIS OF CYS-61; HIS-92; CYS-96; CYS-101; CYS-104; CYS-113; CYS-137 AND CYS-141</scope>
</reference>
<gene>
    <name type="primary">nqo2</name>
</gene>
<comment type="function">
    <text>NDH-1 shuttles electrons from NADH, via FMN and iron-sulfur (Fe-S) centers, to quinones in the respiratory chain. The immediate electron acceptor for the enzyme in this species is believed to be ubiquinone. Couples the redox reaction to proton translocation (for every two electrons transferred, four hydrogen ions are translocated across the cytoplasmic membrane), and thus conserves the redox energy in a proton gradient.</text>
</comment>
<comment type="catalytic activity">
    <reaction>
        <text>a quinone + NADH + 5 H(+)(in) = a quinol + NAD(+) + 4 H(+)(out)</text>
        <dbReference type="Rhea" id="RHEA:57888"/>
        <dbReference type="ChEBI" id="CHEBI:15378"/>
        <dbReference type="ChEBI" id="CHEBI:24646"/>
        <dbReference type="ChEBI" id="CHEBI:57540"/>
        <dbReference type="ChEBI" id="CHEBI:57945"/>
        <dbReference type="ChEBI" id="CHEBI:132124"/>
    </reaction>
</comment>
<comment type="cofactor">
    <cofactor evidence="3">
        <name>[2Fe-2S] cluster</name>
        <dbReference type="ChEBI" id="CHEBI:190135"/>
    </cofactor>
    <text evidence="3">Binds 1 [2Fe-2S] cluster.</text>
</comment>
<comment type="subunit">
    <text>NDH-1 is composed of at least 14 different subunits, Nqo1 to Nqo14. The complex has a L-shaped structure, with the hydrophobic arm (subunits Nqo7, Nqo8, Nqo10 to Nqo14) embedded in the inner membrane and the hydrophilic peripheral arm (subunits Nqo1 to Nqo6, Nqo9) protruding into the bacterial cytoplasm. The hydrophilic domain contains all the redox centers.</text>
</comment>
<comment type="subcellular location">
    <subcellularLocation>
        <location>Cell inner membrane</location>
        <topology>Peripheral membrane protein</topology>
    </subcellularLocation>
</comment>
<comment type="similarity">
    <text evidence="2">Belongs to the complex I 24 kDa subunit family.</text>
</comment>
<keyword id="KW-0001">2Fe-2S</keyword>
<keyword id="KW-0997">Cell inner membrane</keyword>
<keyword id="KW-1003">Cell membrane</keyword>
<keyword id="KW-0903">Direct protein sequencing</keyword>
<keyword id="KW-0408">Iron</keyword>
<keyword id="KW-0411">Iron-sulfur</keyword>
<keyword id="KW-0472">Membrane</keyword>
<keyword id="KW-0479">Metal-binding</keyword>
<keyword id="KW-0520">NAD</keyword>
<keyword id="KW-0874">Quinone</keyword>
<keyword id="KW-1278">Translocase</keyword>
<keyword id="KW-0830">Ubiquinone</keyword>
<feature type="chain" id="PRO_0000118685" description="NADH-quinone oxidoreductase chain 2">
    <location>
        <begin position="1"/>
        <end position="239"/>
    </location>
</feature>
<feature type="binding site" evidence="3">
    <location>
        <position position="96"/>
    </location>
    <ligand>
        <name>[2Fe-2S] cluster</name>
        <dbReference type="ChEBI" id="CHEBI:190135"/>
    </ligand>
</feature>
<feature type="binding site" evidence="3">
    <location>
        <position position="101"/>
    </location>
    <ligand>
        <name>[2Fe-2S] cluster</name>
        <dbReference type="ChEBI" id="CHEBI:190135"/>
    </ligand>
</feature>
<feature type="binding site" evidence="3">
    <location>
        <position position="137"/>
    </location>
    <ligand>
        <name>[2Fe-2S] cluster</name>
        <dbReference type="ChEBI" id="CHEBI:190135"/>
    </ligand>
</feature>
<feature type="binding site" evidence="3">
    <location>
        <position position="141"/>
    </location>
    <ligand>
        <name>[2Fe-2S] cluster</name>
        <dbReference type="ChEBI" id="CHEBI:190135"/>
    </ligand>
</feature>
<feature type="mutagenesis site" description="No change in UV-visible and EPR spectra." evidence="1">
    <original>C</original>
    <variation>S</variation>
    <location>
        <position position="61"/>
    </location>
</feature>
<feature type="mutagenesis site" description="No change in UV-visible and EPR spectra." evidence="1">
    <original>H</original>
    <variation>A</variation>
    <location>
        <position position="92"/>
    </location>
</feature>
<feature type="mutagenesis site" description="Alters UV-visible and EPR spectra." evidence="1">
    <original>C</original>
    <variation>A</variation>
    <variation>S</variation>
    <location>
        <position position="96"/>
    </location>
</feature>
<feature type="mutagenesis site" description="Alters UV-visible and EPR spectra." evidence="1">
    <original>C</original>
    <variation>A</variation>
    <variation>S</variation>
    <location>
        <position position="101"/>
    </location>
</feature>
<feature type="mutagenesis site" description="No change in UV-visible and EPR spectra." evidence="1">
    <original>C</original>
    <variation>S</variation>
    <location>
        <position position="104"/>
    </location>
</feature>
<feature type="mutagenesis site" description="No change in UV-visible and EPR spectra." evidence="1">
    <original>C</original>
    <variation>S</variation>
    <location>
        <position position="113"/>
    </location>
</feature>
<feature type="mutagenesis site" description="Alters UV-visible and EPR spectra." evidence="1">
    <original>C</original>
    <variation>A</variation>
    <variation>S</variation>
    <location>
        <position position="137"/>
    </location>
</feature>
<feature type="mutagenesis site" description="Alters UV-visible and EPR spectra." evidence="1">
    <original>C</original>
    <variation>A</variation>
    <variation>S</variation>
    <location>
        <position position="141"/>
    </location>
</feature>
<evidence type="ECO:0000269" key="1">
    <source>
    </source>
</evidence>
<evidence type="ECO:0000305" key="2"/>
<evidence type="ECO:0000305" key="3">
    <source>
    </source>
</evidence>